<reference key="1">
    <citation type="journal article" date="1990" name="Gene">
        <title>Cloning, sequence and expression in Escherichia coli of the Methylobacillus flagellatum recA gene.</title>
        <authorList>
            <person name="Gomelsky M."/>
            <person name="Gak E."/>
            <person name="Chistoserdov A."/>
            <person name="Bolotin A."/>
            <person name="Tsygankov Y.D."/>
        </authorList>
    </citation>
    <scope>NUCLEOTIDE SEQUENCE [GENOMIC DNA]</scope>
</reference>
<organism>
    <name type="scientific">Methylobacillus flagellatus</name>
    <dbReference type="NCBI Taxonomy" id="405"/>
    <lineage>
        <taxon>Bacteria</taxon>
        <taxon>Pseudomonadati</taxon>
        <taxon>Pseudomonadota</taxon>
        <taxon>Betaproteobacteria</taxon>
        <taxon>Nitrosomonadales</taxon>
        <taxon>Methylophilaceae</taxon>
        <taxon>Methylobacillus</taxon>
    </lineage>
</organism>
<dbReference type="EMBL" id="M35325">
    <property type="protein sequence ID" value="AAA25386.1"/>
    <property type="molecule type" value="Genomic_DNA"/>
</dbReference>
<dbReference type="SMR" id="P18076"/>
<dbReference type="GO" id="GO:0005829">
    <property type="term" value="C:cytosol"/>
    <property type="evidence" value="ECO:0007669"/>
    <property type="project" value="TreeGrafter"/>
</dbReference>
<dbReference type="GO" id="GO:0005524">
    <property type="term" value="F:ATP binding"/>
    <property type="evidence" value="ECO:0007669"/>
    <property type="project" value="UniProtKB-UniRule"/>
</dbReference>
<dbReference type="GO" id="GO:0016887">
    <property type="term" value="F:ATP hydrolysis activity"/>
    <property type="evidence" value="ECO:0007669"/>
    <property type="project" value="InterPro"/>
</dbReference>
<dbReference type="GO" id="GO:0140664">
    <property type="term" value="F:ATP-dependent DNA damage sensor activity"/>
    <property type="evidence" value="ECO:0007669"/>
    <property type="project" value="InterPro"/>
</dbReference>
<dbReference type="GO" id="GO:0003684">
    <property type="term" value="F:damaged DNA binding"/>
    <property type="evidence" value="ECO:0007669"/>
    <property type="project" value="UniProtKB-UniRule"/>
</dbReference>
<dbReference type="GO" id="GO:0003697">
    <property type="term" value="F:single-stranded DNA binding"/>
    <property type="evidence" value="ECO:0007669"/>
    <property type="project" value="UniProtKB-UniRule"/>
</dbReference>
<dbReference type="GO" id="GO:0006310">
    <property type="term" value="P:DNA recombination"/>
    <property type="evidence" value="ECO:0007669"/>
    <property type="project" value="UniProtKB-UniRule"/>
</dbReference>
<dbReference type="GO" id="GO:0006281">
    <property type="term" value="P:DNA repair"/>
    <property type="evidence" value="ECO:0007669"/>
    <property type="project" value="UniProtKB-UniRule"/>
</dbReference>
<dbReference type="GO" id="GO:0009432">
    <property type="term" value="P:SOS response"/>
    <property type="evidence" value="ECO:0007669"/>
    <property type="project" value="UniProtKB-UniRule"/>
</dbReference>
<dbReference type="CDD" id="cd00983">
    <property type="entry name" value="RecA"/>
    <property type="match status" value="1"/>
</dbReference>
<dbReference type="FunFam" id="3.40.50.300:FF:000087">
    <property type="entry name" value="Recombinase RecA"/>
    <property type="match status" value="1"/>
</dbReference>
<dbReference type="Gene3D" id="3.40.50.300">
    <property type="entry name" value="P-loop containing nucleotide triphosphate hydrolases"/>
    <property type="match status" value="1"/>
</dbReference>
<dbReference type="HAMAP" id="MF_00268">
    <property type="entry name" value="RecA"/>
    <property type="match status" value="1"/>
</dbReference>
<dbReference type="InterPro" id="IPR003593">
    <property type="entry name" value="AAA+_ATPase"/>
</dbReference>
<dbReference type="InterPro" id="IPR013765">
    <property type="entry name" value="DNA_recomb/repair_RecA"/>
</dbReference>
<dbReference type="InterPro" id="IPR020584">
    <property type="entry name" value="DNA_recomb/repair_RecA_CS"/>
</dbReference>
<dbReference type="InterPro" id="IPR027417">
    <property type="entry name" value="P-loop_NTPase"/>
</dbReference>
<dbReference type="InterPro" id="IPR049261">
    <property type="entry name" value="RecA-like_C"/>
</dbReference>
<dbReference type="InterPro" id="IPR049428">
    <property type="entry name" value="RecA-like_N"/>
</dbReference>
<dbReference type="InterPro" id="IPR020588">
    <property type="entry name" value="RecA_ATP-bd"/>
</dbReference>
<dbReference type="InterPro" id="IPR023400">
    <property type="entry name" value="RecA_C_sf"/>
</dbReference>
<dbReference type="InterPro" id="IPR020587">
    <property type="entry name" value="RecA_monomer-monomer_interface"/>
</dbReference>
<dbReference type="NCBIfam" id="TIGR02012">
    <property type="entry name" value="tigrfam_recA"/>
    <property type="match status" value="1"/>
</dbReference>
<dbReference type="PANTHER" id="PTHR45900:SF1">
    <property type="entry name" value="MITOCHONDRIAL DNA REPAIR PROTEIN RECA HOMOLOG-RELATED"/>
    <property type="match status" value="1"/>
</dbReference>
<dbReference type="PANTHER" id="PTHR45900">
    <property type="entry name" value="RECA"/>
    <property type="match status" value="1"/>
</dbReference>
<dbReference type="Pfam" id="PF00154">
    <property type="entry name" value="RecA"/>
    <property type="match status" value="1"/>
</dbReference>
<dbReference type="Pfam" id="PF21096">
    <property type="entry name" value="RecA_C"/>
    <property type="match status" value="1"/>
</dbReference>
<dbReference type="PRINTS" id="PR00142">
    <property type="entry name" value="RECA"/>
</dbReference>
<dbReference type="SMART" id="SM00382">
    <property type="entry name" value="AAA"/>
    <property type="match status" value="1"/>
</dbReference>
<dbReference type="SUPFAM" id="SSF52540">
    <property type="entry name" value="P-loop containing nucleoside triphosphate hydrolases"/>
    <property type="match status" value="1"/>
</dbReference>
<dbReference type="SUPFAM" id="SSF54752">
    <property type="entry name" value="RecA protein, C-terminal domain"/>
    <property type="match status" value="1"/>
</dbReference>
<dbReference type="PROSITE" id="PS00321">
    <property type="entry name" value="RECA_1"/>
    <property type="match status" value="1"/>
</dbReference>
<dbReference type="PROSITE" id="PS50162">
    <property type="entry name" value="RECA_2"/>
    <property type="match status" value="1"/>
</dbReference>
<dbReference type="PROSITE" id="PS50163">
    <property type="entry name" value="RECA_3"/>
    <property type="match status" value="1"/>
</dbReference>
<comment type="function">
    <text>Can catalyze the hydrolysis of ATP in the presence of single-stranded DNA, the ATP-dependent uptake of single-stranded DNA by duplex DNA, and the ATP-dependent hybridization of homologous single-stranded DNAs. It interacts with LexA causing its activation and leading to its autocatalytic cleavage.</text>
</comment>
<comment type="subcellular location">
    <subcellularLocation>
        <location evidence="1">Cytoplasm</location>
    </subcellularLocation>
</comment>
<comment type="similarity">
    <text evidence="1">Belongs to the RecA family.</text>
</comment>
<gene>
    <name evidence="1" type="primary">recA</name>
</gene>
<evidence type="ECO:0000255" key="1">
    <source>
        <dbReference type="HAMAP-Rule" id="MF_00268"/>
    </source>
</evidence>
<accession>P18076</accession>
<proteinExistence type="inferred from homology"/>
<feature type="chain" id="PRO_0000122757" description="Protein RecA">
    <location>
        <begin position="1"/>
        <end position="344"/>
    </location>
</feature>
<feature type="binding site" evidence="1">
    <location>
        <begin position="66"/>
        <end position="73"/>
    </location>
    <ligand>
        <name>ATP</name>
        <dbReference type="ChEBI" id="CHEBI:30616"/>
    </ligand>
</feature>
<sequence length="344" mass="36956">MDENRSKALAAALSQIEKQFGKGSIMRMGDTDVAADIQAVSTGSLGLDIALGIGGLPRGRIVEIYGPESSGKTTLTLSVIAQMQKLGGTAAFIDAEHALDPVYAQKLGVNVSDLLISQPDTGEQALEIADMLVRSGSVDVVVVDSVAALTPKAEIEGEMGDSHMGLQARLMSQALRKLTANIKRTNTLVIFINQIRMKIGLMFGNPETTTGGNALKFYASVRLDIRRTGAIKKGDEVTGSETRVKVVKNNVAPPFKLAEFDILYGEGISREGEIIELGVNLKLIEKAGAWYSYKGEKIGQGKDNAREFLREHPEIANEIDAKIREHSNLANAAMTTAPDEESDE</sequence>
<keyword id="KW-0067">ATP-binding</keyword>
<keyword id="KW-0963">Cytoplasm</keyword>
<keyword id="KW-0227">DNA damage</keyword>
<keyword id="KW-0233">DNA recombination</keyword>
<keyword id="KW-0234">DNA repair</keyword>
<keyword id="KW-0238">DNA-binding</keyword>
<keyword id="KW-0547">Nucleotide-binding</keyword>
<keyword id="KW-0742">SOS response</keyword>
<name>RECA_METFL</name>
<protein>
    <recommendedName>
        <fullName evidence="1">Protein RecA</fullName>
    </recommendedName>
    <alternativeName>
        <fullName evidence="1">Recombinase A</fullName>
    </alternativeName>
</protein>